<reference key="1">
    <citation type="journal article" date="2005" name="Science">
        <title>The transcriptional landscape of the mammalian genome.</title>
        <authorList>
            <person name="Carninci P."/>
            <person name="Kasukawa T."/>
            <person name="Katayama S."/>
            <person name="Gough J."/>
            <person name="Frith M.C."/>
            <person name="Maeda N."/>
            <person name="Oyama R."/>
            <person name="Ravasi T."/>
            <person name="Lenhard B."/>
            <person name="Wells C."/>
            <person name="Kodzius R."/>
            <person name="Shimokawa K."/>
            <person name="Bajic V.B."/>
            <person name="Brenner S.E."/>
            <person name="Batalov S."/>
            <person name="Forrest A.R."/>
            <person name="Zavolan M."/>
            <person name="Davis M.J."/>
            <person name="Wilming L.G."/>
            <person name="Aidinis V."/>
            <person name="Allen J.E."/>
            <person name="Ambesi-Impiombato A."/>
            <person name="Apweiler R."/>
            <person name="Aturaliya R.N."/>
            <person name="Bailey T.L."/>
            <person name="Bansal M."/>
            <person name="Baxter L."/>
            <person name="Beisel K.W."/>
            <person name="Bersano T."/>
            <person name="Bono H."/>
            <person name="Chalk A.M."/>
            <person name="Chiu K.P."/>
            <person name="Choudhary V."/>
            <person name="Christoffels A."/>
            <person name="Clutterbuck D.R."/>
            <person name="Crowe M.L."/>
            <person name="Dalla E."/>
            <person name="Dalrymple B.P."/>
            <person name="de Bono B."/>
            <person name="Della Gatta G."/>
            <person name="di Bernardo D."/>
            <person name="Down T."/>
            <person name="Engstrom P."/>
            <person name="Fagiolini M."/>
            <person name="Faulkner G."/>
            <person name="Fletcher C.F."/>
            <person name="Fukushima T."/>
            <person name="Furuno M."/>
            <person name="Futaki S."/>
            <person name="Gariboldi M."/>
            <person name="Georgii-Hemming P."/>
            <person name="Gingeras T.R."/>
            <person name="Gojobori T."/>
            <person name="Green R.E."/>
            <person name="Gustincich S."/>
            <person name="Harbers M."/>
            <person name="Hayashi Y."/>
            <person name="Hensch T.K."/>
            <person name="Hirokawa N."/>
            <person name="Hill D."/>
            <person name="Huminiecki L."/>
            <person name="Iacono M."/>
            <person name="Ikeo K."/>
            <person name="Iwama A."/>
            <person name="Ishikawa T."/>
            <person name="Jakt M."/>
            <person name="Kanapin A."/>
            <person name="Katoh M."/>
            <person name="Kawasawa Y."/>
            <person name="Kelso J."/>
            <person name="Kitamura H."/>
            <person name="Kitano H."/>
            <person name="Kollias G."/>
            <person name="Krishnan S.P."/>
            <person name="Kruger A."/>
            <person name="Kummerfeld S.K."/>
            <person name="Kurochkin I.V."/>
            <person name="Lareau L.F."/>
            <person name="Lazarevic D."/>
            <person name="Lipovich L."/>
            <person name="Liu J."/>
            <person name="Liuni S."/>
            <person name="McWilliam S."/>
            <person name="Madan Babu M."/>
            <person name="Madera M."/>
            <person name="Marchionni L."/>
            <person name="Matsuda H."/>
            <person name="Matsuzawa S."/>
            <person name="Miki H."/>
            <person name="Mignone F."/>
            <person name="Miyake S."/>
            <person name="Morris K."/>
            <person name="Mottagui-Tabar S."/>
            <person name="Mulder N."/>
            <person name="Nakano N."/>
            <person name="Nakauchi H."/>
            <person name="Ng P."/>
            <person name="Nilsson R."/>
            <person name="Nishiguchi S."/>
            <person name="Nishikawa S."/>
            <person name="Nori F."/>
            <person name="Ohara O."/>
            <person name="Okazaki Y."/>
            <person name="Orlando V."/>
            <person name="Pang K.C."/>
            <person name="Pavan W.J."/>
            <person name="Pavesi G."/>
            <person name="Pesole G."/>
            <person name="Petrovsky N."/>
            <person name="Piazza S."/>
            <person name="Reed J."/>
            <person name="Reid J.F."/>
            <person name="Ring B.Z."/>
            <person name="Ringwald M."/>
            <person name="Rost B."/>
            <person name="Ruan Y."/>
            <person name="Salzberg S.L."/>
            <person name="Sandelin A."/>
            <person name="Schneider C."/>
            <person name="Schoenbach C."/>
            <person name="Sekiguchi K."/>
            <person name="Semple C.A."/>
            <person name="Seno S."/>
            <person name="Sessa L."/>
            <person name="Sheng Y."/>
            <person name="Shibata Y."/>
            <person name="Shimada H."/>
            <person name="Shimada K."/>
            <person name="Silva D."/>
            <person name="Sinclair B."/>
            <person name="Sperling S."/>
            <person name="Stupka E."/>
            <person name="Sugiura K."/>
            <person name="Sultana R."/>
            <person name="Takenaka Y."/>
            <person name="Taki K."/>
            <person name="Tammoja K."/>
            <person name="Tan S.L."/>
            <person name="Tang S."/>
            <person name="Taylor M.S."/>
            <person name="Tegner J."/>
            <person name="Teichmann S.A."/>
            <person name="Ueda H.R."/>
            <person name="van Nimwegen E."/>
            <person name="Verardo R."/>
            <person name="Wei C.L."/>
            <person name="Yagi K."/>
            <person name="Yamanishi H."/>
            <person name="Zabarovsky E."/>
            <person name="Zhu S."/>
            <person name="Zimmer A."/>
            <person name="Hide W."/>
            <person name="Bult C."/>
            <person name="Grimmond S.M."/>
            <person name="Teasdale R.D."/>
            <person name="Liu E.T."/>
            <person name="Brusic V."/>
            <person name="Quackenbush J."/>
            <person name="Wahlestedt C."/>
            <person name="Mattick J.S."/>
            <person name="Hume D.A."/>
            <person name="Kai C."/>
            <person name="Sasaki D."/>
            <person name="Tomaru Y."/>
            <person name="Fukuda S."/>
            <person name="Kanamori-Katayama M."/>
            <person name="Suzuki M."/>
            <person name="Aoki J."/>
            <person name="Arakawa T."/>
            <person name="Iida J."/>
            <person name="Imamura K."/>
            <person name="Itoh M."/>
            <person name="Kato T."/>
            <person name="Kawaji H."/>
            <person name="Kawagashira N."/>
            <person name="Kawashima T."/>
            <person name="Kojima M."/>
            <person name="Kondo S."/>
            <person name="Konno H."/>
            <person name="Nakano K."/>
            <person name="Ninomiya N."/>
            <person name="Nishio T."/>
            <person name="Okada M."/>
            <person name="Plessy C."/>
            <person name="Shibata K."/>
            <person name="Shiraki T."/>
            <person name="Suzuki S."/>
            <person name="Tagami M."/>
            <person name="Waki K."/>
            <person name="Watahiki A."/>
            <person name="Okamura-Oho Y."/>
            <person name="Suzuki H."/>
            <person name="Kawai J."/>
            <person name="Hayashizaki Y."/>
        </authorList>
    </citation>
    <scope>NUCLEOTIDE SEQUENCE [LARGE SCALE MRNA]</scope>
    <source>
        <strain>C57BL/6J</strain>
        <tissue>Eye</tissue>
    </source>
</reference>
<reference key="2">
    <citation type="journal article" date="2009" name="PLoS Biol.">
        <title>Lineage-specific biology revealed by a finished genome assembly of the mouse.</title>
        <authorList>
            <person name="Church D.M."/>
            <person name="Goodstadt L."/>
            <person name="Hillier L.W."/>
            <person name="Zody M.C."/>
            <person name="Goldstein S."/>
            <person name="She X."/>
            <person name="Bult C.J."/>
            <person name="Agarwala R."/>
            <person name="Cherry J.L."/>
            <person name="DiCuccio M."/>
            <person name="Hlavina W."/>
            <person name="Kapustin Y."/>
            <person name="Meric P."/>
            <person name="Maglott D."/>
            <person name="Birtle Z."/>
            <person name="Marques A.C."/>
            <person name="Graves T."/>
            <person name="Zhou S."/>
            <person name="Teague B."/>
            <person name="Potamousis K."/>
            <person name="Churas C."/>
            <person name="Place M."/>
            <person name="Herschleb J."/>
            <person name="Runnheim R."/>
            <person name="Forrest D."/>
            <person name="Amos-Landgraf J."/>
            <person name="Schwartz D.C."/>
            <person name="Cheng Z."/>
            <person name="Lindblad-Toh K."/>
            <person name="Eichler E.E."/>
            <person name="Ponting C.P."/>
        </authorList>
    </citation>
    <scope>NUCLEOTIDE SEQUENCE [LARGE SCALE GENOMIC DNA]</scope>
    <source>
        <strain>C57BL/6J</strain>
    </source>
</reference>
<reference key="3">
    <citation type="journal article" date="2004" name="Genome Res.">
        <title>The status, quality, and expansion of the NIH full-length cDNA project: the Mammalian Gene Collection (MGC).</title>
        <authorList>
            <consortium name="The MGC Project Team"/>
        </authorList>
    </citation>
    <scope>NUCLEOTIDE SEQUENCE [LARGE SCALE MRNA]</scope>
    <source>
        <tissue>Brain</tissue>
    </source>
</reference>
<sequence>MDEPWWEGRVASDVHCTLREKELKLPTFRAHSPLLKSRRFFVDILTLLSRHCHLCPSARHLAIYLLDHFMDQYNITTSKQLYTVAVSCLLLASKFEDREDRVPKLEQINNTRILSSQNFSLTKKELLTTELLLLEAFSWDLCLPTPAHFLDYYLLASISQKDHHCHAWPTTCLRKTKECLKEYAHYFLEVTLQDHIFYKFQPSVVAAACVGASRICLQLSPYWTRDLQRVSSYSLEHLSTCIEILLVAYDNVLKDAVAVKSQTLAMVPGSSSAPAQVLFQPPTYPTLSQPPPTTLAQFQSPAQDLCLAYRDSLQAHRSGGLLSGDTGPSLHTPYPTLQPLDMCPVPVPASLSMQMAIAAEPRHCLTASYGSSYFSGSHMFPAGCFDS</sequence>
<keyword id="KW-0195">Cyclin</keyword>
<keyword id="KW-1185">Reference proteome</keyword>
<comment type="similarity">
    <text evidence="1">Belongs to the cyclin family. Cyclin J subfamily.</text>
</comment>
<accession>Q5SRT8</accession>
<accession>B2RTH5</accession>
<feature type="chain" id="PRO_0000309320" description="Cyclin-J-like protein">
    <location>
        <begin position="1"/>
        <end position="387"/>
    </location>
</feature>
<feature type="domain" description="Cyclin N-terminal">
    <location>
        <begin position="13"/>
        <end position="142"/>
    </location>
</feature>
<protein>
    <recommendedName>
        <fullName>Cyclin-J-like protein</fullName>
    </recommendedName>
</protein>
<name>CCNJL_MOUSE</name>
<dbReference type="EMBL" id="AK143205">
    <property type="protein sequence ID" value="BAE25304.1"/>
    <property type="molecule type" value="mRNA"/>
</dbReference>
<dbReference type="EMBL" id="AL670472">
    <property type="status" value="NOT_ANNOTATED_CDS"/>
    <property type="molecule type" value="Genomic_DNA"/>
</dbReference>
<dbReference type="EMBL" id="BC139344">
    <property type="protein sequence ID" value="AAI39345.1"/>
    <property type="molecule type" value="mRNA"/>
</dbReference>
<dbReference type="EMBL" id="BC139345">
    <property type="protein sequence ID" value="AAI39346.1"/>
    <property type="molecule type" value="mRNA"/>
</dbReference>
<dbReference type="CCDS" id="CCDS24559.1"/>
<dbReference type="RefSeq" id="NP_001038995.1">
    <property type="nucleotide sequence ID" value="NM_001045530.2"/>
</dbReference>
<dbReference type="SMR" id="Q5SRT8"/>
<dbReference type="FunCoup" id="Q5SRT8">
    <property type="interactions" value="565"/>
</dbReference>
<dbReference type="STRING" id="10090.ENSMUSP00000058111"/>
<dbReference type="PhosphoSitePlus" id="Q5SRT8"/>
<dbReference type="PaxDb" id="10090-ENSMUSP00000058111"/>
<dbReference type="Antibodypedia" id="45857">
    <property type="antibodies" value="113 antibodies from 18 providers"/>
</dbReference>
<dbReference type="Ensembl" id="ENSMUST00000050574.7">
    <property type="protein sequence ID" value="ENSMUSP00000058111.7"/>
    <property type="gene ID" value="ENSMUSG00000044707.8"/>
</dbReference>
<dbReference type="GeneID" id="380694"/>
<dbReference type="KEGG" id="mmu:380694"/>
<dbReference type="UCSC" id="uc007ims.2">
    <property type="organism name" value="mouse"/>
</dbReference>
<dbReference type="AGR" id="MGI:2685723"/>
<dbReference type="CTD" id="79616"/>
<dbReference type="MGI" id="MGI:2685723">
    <property type="gene designation" value="Ccnjl"/>
</dbReference>
<dbReference type="VEuPathDB" id="HostDB:ENSMUSG00000044707"/>
<dbReference type="eggNOG" id="KOG0654">
    <property type="taxonomic scope" value="Eukaryota"/>
</dbReference>
<dbReference type="GeneTree" id="ENSGT00940000159349"/>
<dbReference type="HOGENOM" id="CLU_063883_0_0_1"/>
<dbReference type="InParanoid" id="Q5SRT8"/>
<dbReference type="OMA" id="WDLCLPT"/>
<dbReference type="OrthoDB" id="285802at2759"/>
<dbReference type="PhylomeDB" id="Q5SRT8"/>
<dbReference type="TreeFam" id="TF101009"/>
<dbReference type="BioGRID-ORCS" id="380694">
    <property type="hits" value="2 hits in 77 CRISPR screens"/>
</dbReference>
<dbReference type="ChiTaRS" id="Ccnjl">
    <property type="organism name" value="mouse"/>
</dbReference>
<dbReference type="PRO" id="PR:Q5SRT8"/>
<dbReference type="Proteomes" id="UP000000589">
    <property type="component" value="Chromosome 11"/>
</dbReference>
<dbReference type="RNAct" id="Q5SRT8">
    <property type="molecule type" value="protein"/>
</dbReference>
<dbReference type="Bgee" id="ENSMUSG00000044707">
    <property type="expression patterns" value="Expressed in embryonic post-anal tail and 139 other cell types or tissues"/>
</dbReference>
<dbReference type="CDD" id="cd20528">
    <property type="entry name" value="CYCLIN_CCNJ-like_rpt1"/>
    <property type="match status" value="1"/>
</dbReference>
<dbReference type="CDD" id="cd20529">
    <property type="entry name" value="CYCLIN_CCNJ-like_rpt2"/>
    <property type="match status" value="1"/>
</dbReference>
<dbReference type="FunFam" id="1.10.472.10:FF:000041">
    <property type="entry name" value="Cyclin J like"/>
    <property type="match status" value="1"/>
</dbReference>
<dbReference type="FunFam" id="1.10.472.10:FF:000047">
    <property type="entry name" value="Cyclin J like"/>
    <property type="match status" value="1"/>
</dbReference>
<dbReference type="Gene3D" id="1.10.472.10">
    <property type="entry name" value="Cyclin-like"/>
    <property type="match status" value="2"/>
</dbReference>
<dbReference type="InterPro" id="IPR039361">
    <property type="entry name" value="Cyclin"/>
</dbReference>
<dbReference type="InterPro" id="IPR013763">
    <property type="entry name" value="Cyclin-like_dom"/>
</dbReference>
<dbReference type="InterPro" id="IPR036915">
    <property type="entry name" value="Cyclin-like_sf"/>
</dbReference>
<dbReference type="InterPro" id="IPR004367">
    <property type="entry name" value="Cyclin_C-dom"/>
</dbReference>
<dbReference type="InterPro" id="IPR006671">
    <property type="entry name" value="Cyclin_N"/>
</dbReference>
<dbReference type="PANTHER" id="PTHR10177">
    <property type="entry name" value="CYCLINS"/>
    <property type="match status" value="1"/>
</dbReference>
<dbReference type="Pfam" id="PF02984">
    <property type="entry name" value="Cyclin_C"/>
    <property type="match status" value="1"/>
</dbReference>
<dbReference type="Pfam" id="PF00134">
    <property type="entry name" value="Cyclin_N"/>
    <property type="match status" value="1"/>
</dbReference>
<dbReference type="SMART" id="SM00385">
    <property type="entry name" value="CYCLIN"/>
    <property type="match status" value="2"/>
</dbReference>
<dbReference type="SMART" id="SM01332">
    <property type="entry name" value="Cyclin_C"/>
    <property type="match status" value="1"/>
</dbReference>
<dbReference type="SUPFAM" id="SSF47954">
    <property type="entry name" value="Cyclin-like"/>
    <property type="match status" value="2"/>
</dbReference>
<gene>
    <name type="primary">Ccnjl</name>
    <name type="synonym">Gm877</name>
</gene>
<evidence type="ECO:0000305" key="1"/>
<organism>
    <name type="scientific">Mus musculus</name>
    <name type="common">Mouse</name>
    <dbReference type="NCBI Taxonomy" id="10090"/>
    <lineage>
        <taxon>Eukaryota</taxon>
        <taxon>Metazoa</taxon>
        <taxon>Chordata</taxon>
        <taxon>Craniata</taxon>
        <taxon>Vertebrata</taxon>
        <taxon>Euteleostomi</taxon>
        <taxon>Mammalia</taxon>
        <taxon>Eutheria</taxon>
        <taxon>Euarchontoglires</taxon>
        <taxon>Glires</taxon>
        <taxon>Rodentia</taxon>
        <taxon>Myomorpha</taxon>
        <taxon>Muroidea</taxon>
        <taxon>Muridae</taxon>
        <taxon>Murinae</taxon>
        <taxon>Mus</taxon>
        <taxon>Mus</taxon>
    </lineage>
</organism>
<proteinExistence type="evidence at transcript level"/>